<gene>
    <name type="primary">CYP2C15</name>
</gene>
<organism>
    <name type="scientific">Oryctolagus cuniculus</name>
    <name type="common">Rabbit</name>
    <dbReference type="NCBI Taxonomy" id="9986"/>
    <lineage>
        <taxon>Eukaryota</taxon>
        <taxon>Metazoa</taxon>
        <taxon>Chordata</taxon>
        <taxon>Craniata</taxon>
        <taxon>Vertebrata</taxon>
        <taxon>Euteleostomi</taxon>
        <taxon>Mammalia</taxon>
        <taxon>Eutheria</taxon>
        <taxon>Euarchontoglires</taxon>
        <taxon>Glires</taxon>
        <taxon>Lagomorpha</taxon>
        <taxon>Leporidae</taxon>
        <taxon>Oryctolagus</taxon>
    </lineage>
</organism>
<name>CP2CF_RABIT</name>
<feature type="chain" id="PRO_0000051705" description="Cytochrome P450 2C15">
    <location>
        <begin position="1" status="less than"/>
        <end position="378"/>
    </location>
</feature>
<feature type="binding site" description="axial binding residue">
    <location>
        <position position="323"/>
    </location>
    <ligand>
        <name>heme</name>
        <dbReference type="ChEBI" id="CHEBI:30413"/>
    </ligand>
    <ligandPart>
        <name>Fe</name>
        <dbReference type="ChEBI" id="CHEBI:18248"/>
    </ligandPart>
</feature>
<feature type="non-terminal residue">
    <location>
        <position position="1"/>
    </location>
</feature>
<comment type="function">
    <text>Cytochromes P450 are a group of heme-thiolate monooxygenases. In liver microsomes, this enzyme is involved in an NADPH-dependent electron transport pathway. It oxidizes a variety of structurally unrelated compounds, including steroids, fatty acids, and xenobiotics.</text>
</comment>
<comment type="catalytic activity">
    <reaction>
        <text>an organic molecule + reduced [NADPH--hemoprotein reductase] + O2 = an alcohol + oxidized [NADPH--hemoprotein reductase] + H2O + H(+)</text>
        <dbReference type="Rhea" id="RHEA:17149"/>
        <dbReference type="Rhea" id="RHEA-COMP:11964"/>
        <dbReference type="Rhea" id="RHEA-COMP:11965"/>
        <dbReference type="ChEBI" id="CHEBI:15377"/>
        <dbReference type="ChEBI" id="CHEBI:15378"/>
        <dbReference type="ChEBI" id="CHEBI:15379"/>
        <dbReference type="ChEBI" id="CHEBI:30879"/>
        <dbReference type="ChEBI" id="CHEBI:57618"/>
        <dbReference type="ChEBI" id="CHEBI:58210"/>
        <dbReference type="ChEBI" id="CHEBI:142491"/>
        <dbReference type="EC" id="1.14.14.1"/>
    </reaction>
</comment>
<comment type="cofactor">
    <cofactor evidence="1">
        <name>heme</name>
        <dbReference type="ChEBI" id="CHEBI:30413"/>
    </cofactor>
</comment>
<comment type="subcellular location">
    <subcellularLocation>
        <location>Endoplasmic reticulum membrane</location>
        <topology>Peripheral membrane protein</topology>
    </subcellularLocation>
    <subcellularLocation>
        <location>Microsome membrane</location>
        <topology>Peripheral membrane protein</topology>
    </subcellularLocation>
</comment>
<comment type="induction">
    <text>P450 can be induced to high levels in liver and other tissues by various foreign compounds, including drugs, pesticides, and carcinogens.</text>
</comment>
<comment type="similarity">
    <text evidence="2">Belongs to the cytochrome P450 family.</text>
</comment>
<protein>
    <recommendedName>
        <fullName>Cytochrome P450 2C15</fullName>
        <ecNumber>1.14.14.1</ecNumber>
    </recommendedName>
    <alternativeName>
        <fullName>CYPIIC15</fullName>
    </alternativeName>
    <alternativeName>
        <fullName>Cytochrome P450 B32-3</fullName>
    </alternativeName>
</protein>
<proteinExistence type="evidence at transcript level"/>
<accession>P11372</accession>
<reference key="1">
    <citation type="journal article" date="1988" name="Biochemistry">
        <title>Comparison of primary structures deduced from cDNA nucleotide sequences for various forms of liver microsomal cytochrome P-450 from phenobarbital-treated rabbits.</title>
        <authorList>
            <person name="Imai Y."/>
            <person name="Komori M."/>
            <person name="Sato R."/>
        </authorList>
    </citation>
    <scope>NUCLEOTIDE SEQUENCE [MRNA]</scope>
</reference>
<evidence type="ECO:0000250" key="1"/>
<evidence type="ECO:0000305" key="2"/>
<dbReference type="EC" id="1.14.14.1"/>
<dbReference type="EMBL" id="M19234">
    <property type="protein sequence ID" value="AAA31218.1"/>
    <property type="molecule type" value="mRNA"/>
</dbReference>
<dbReference type="PIR" id="B27718">
    <property type="entry name" value="B27718"/>
</dbReference>
<dbReference type="SMR" id="P11372"/>
<dbReference type="PaxDb" id="9986-ENSOCUP00000012210"/>
<dbReference type="eggNOG" id="KOG0156">
    <property type="taxonomic scope" value="Eukaryota"/>
</dbReference>
<dbReference type="InParanoid" id="P11372"/>
<dbReference type="Proteomes" id="UP000001811">
    <property type="component" value="Unplaced"/>
</dbReference>
<dbReference type="GO" id="GO:0005789">
    <property type="term" value="C:endoplasmic reticulum membrane"/>
    <property type="evidence" value="ECO:0007669"/>
    <property type="project" value="UniProtKB-SubCell"/>
</dbReference>
<dbReference type="GO" id="GO:0020037">
    <property type="term" value="F:heme binding"/>
    <property type="evidence" value="ECO:0007669"/>
    <property type="project" value="InterPro"/>
</dbReference>
<dbReference type="GO" id="GO:0005506">
    <property type="term" value="F:iron ion binding"/>
    <property type="evidence" value="ECO:0007669"/>
    <property type="project" value="InterPro"/>
</dbReference>
<dbReference type="GO" id="GO:0016712">
    <property type="term" value="F:oxidoreductase activity, acting on paired donors, with incorporation or reduction of molecular oxygen, reduced flavin or flavoprotein as one donor, and incorporation of one atom of oxygen"/>
    <property type="evidence" value="ECO:0007669"/>
    <property type="project" value="UniProtKB-EC"/>
</dbReference>
<dbReference type="GO" id="GO:0006082">
    <property type="term" value="P:organic acid metabolic process"/>
    <property type="evidence" value="ECO:0007669"/>
    <property type="project" value="TreeGrafter"/>
</dbReference>
<dbReference type="GO" id="GO:0006805">
    <property type="term" value="P:xenobiotic metabolic process"/>
    <property type="evidence" value="ECO:0007669"/>
    <property type="project" value="TreeGrafter"/>
</dbReference>
<dbReference type="CDD" id="cd20665">
    <property type="entry name" value="CYP2C-like"/>
    <property type="match status" value="1"/>
</dbReference>
<dbReference type="FunFam" id="1.10.630.10:FF:000299">
    <property type="entry name" value="Cytochrome P450 2C9"/>
    <property type="match status" value="1"/>
</dbReference>
<dbReference type="Gene3D" id="1.10.630.10">
    <property type="entry name" value="Cytochrome P450"/>
    <property type="match status" value="1"/>
</dbReference>
<dbReference type="InterPro" id="IPR001128">
    <property type="entry name" value="Cyt_P450"/>
</dbReference>
<dbReference type="InterPro" id="IPR017972">
    <property type="entry name" value="Cyt_P450_CS"/>
</dbReference>
<dbReference type="InterPro" id="IPR002401">
    <property type="entry name" value="Cyt_P450_E_grp-I"/>
</dbReference>
<dbReference type="InterPro" id="IPR036396">
    <property type="entry name" value="Cyt_P450_sf"/>
</dbReference>
<dbReference type="InterPro" id="IPR050182">
    <property type="entry name" value="Cytochrome_P450_fam2"/>
</dbReference>
<dbReference type="PANTHER" id="PTHR24300:SF400">
    <property type="entry name" value="CYTOCHROME P450 2C9"/>
    <property type="match status" value="1"/>
</dbReference>
<dbReference type="PANTHER" id="PTHR24300">
    <property type="entry name" value="CYTOCHROME P450 508A4-RELATED"/>
    <property type="match status" value="1"/>
</dbReference>
<dbReference type="Pfam" id="PF00067">
    <property type="entry name" value="p450"/>
    <property type="match status" value="1"/>
</dbReference>
<dbReference type="PRINTS" id="PR00463">
    <property type="entry name" value="EP450I"/>
</dbReference>
<dbReference type="PRINTS" id="PR00385">
    <property type="entry name" value="P450"/>
</dbReference>
<dbReference type="SUPFAM" id="SSF48264">
    <property type="entry name" value="Cytochrome P450"/>
    <property type="match status" value="1"/>
</dbReference>
<dbReference type="PROSITE" id="PS00086">
    <property type="entry name" value="CYTOCHROME_P450"/>
    <property type="match status" value="1"/>
</dbReference>
<keyword id="KW-0256">Endoplasmic reticulum</keyword>
<keyword id="KW-0349">Heme</keyword>
<keyword id="KW-0408">Iron</keyword>
<keyword id="KW-0472">Membrane</keyword>
<keyword id="KW-0479">Metal-binding</keyword>
<keyword id="KW-0492">Microsome</keyword>
<keyword id="KW-0503">Monooxygenase</keyword>
<keyword id="KW-0560">Oxidoreductase</keyword>
<keyword id="KW-1185">Reference proteome</keyword>
<sequence>LGILFSNANTWKEMRRFSLMTLRNFGMGKRSIEDRVQEEARCLVEELRKTNASPCDPTFILGCAPCNVICSIIFHNRFDYKDEHFLKLMEKFNENVRILSSPWLQICNNFPVLTDYLPGIHNTLVKNIEYTKNFIMEKVKEHQKSLDVNNPRDFIDCFLIKMDQENHLEFTLESLVTTVSDLFGAGTETTSTTLSISLLLLLKHPEVAAKVQEEIERVIGRHRSPCMQDRSRMPYTDAVIHEIQRYIDLIPINLPHAVTRDIKFRNYFIPKGMNIITSLTSVLHDEKEFPNPKVFDPGHFLDESGNFKKSDYFMPFSAGKRMCVGEGLARMELFLFLTSILQNFKLQSLVEPKDLDITAVVNGFASVPPAYQLCFSPV</sequence>